<dbReference type="EMBL" id="CP001230">
    <property type="protein sequence ID" value="ACO03315.1"/>
    <property type="molecule type" value="Genomic_DNA"/>
</dbReference>
<dbReference type="RefSeq" id="WP_012675554.1">
    <property type="nucleotide sequence ID" value="NC_012440.1"/>
</dbReference>
<dbReference type="SMR" id="C0QQ90"/>
<dbReference type="STRING" id="123214.PERMA_1050"/>
<dbReference type="PaxDb" id="123214-PERMA_1050"/>
<dbReference type="KEGG" id="pmx:PERMA_1050"/>
<dbReference type="eggNOG" id="COG0355">
    <property type="taxonomic scope" value="Bacteria"/>
</dbReference>
<dbReference type="HOGENOM" id="CLU_084338_1_2_0"/>
<dbReference type="OrthoDB" id="9804110at2"/>
<dbReference type="Proteomes" id="UP000001366">
    <property type="component" value="Chromosome"/>
</dbReference>
<dbReference type="GO" id="GO:0005886">
    <property type="term" value="C:plasma membrane"/>
    <property type="evidence" value="ECO:0007669"/>
    <property type="project" value="UniProtKB-SubCell"/>
</dbReference>
<dbReference type="GO" id="GO:0045259">
    <property type="term" value="C:proton-transporting ATP synthase complex"/>
    <property type="evidence" value="ECO:0007669"/>
    <property type="project" value="UniProtKB-KW"/>
</dbReference>
<dbReference type="GO" id="GO:0005524">
    <property type="term" value="F:ATP binding"/>
    <property type="evidence" value="ECO:0007669"/>
    <property type="project" value="UniProtKB-UniRule"/>
</dbReference>
<dbReference type="GO" id="GO:0046933">
    <property type="term" value="F:proton-transporting ATP synthase activity, rotational mechanism"/>
    <property type="evidence" value="ECO:0007669"/>
    <property type="project" value="UniProtKB-UniRule"/>
</dbReference>
<dbReference type="CDD" id="cd12152">
    <property type="entry name" value="F1-ATPase_delta"/>
    <property type="match status" value="1"/>
</dbReference>
<dbReference type="Gene3D" id="2.60.15.10">
    <property type="entry name" value="F0F1 ATP synthase delta/epsilon subunit, N-terminal"/>
    <property type="match status" value="1"/>
</dbReference>
<dbReference type="HAMAP" id="MF_00530">
    <property type="entry name" value="ATP_synth_epsil_bac"/>
    <property type="match status" value="1"/>
</dbReference>
<dbReference type="InterPro" id="IPR001469">
    <property type="entry name" value="ATP_synth_F1_dsu/esu"/>
</dbReference>
<dbReference type="InterPro" id="IPR020546">
    <property type="entry name" value="ATP_synth_F1_dsu/esu_N"/>
</dbReference>
<dbReference type="InterPro" id="IPR036771">
    <property type="entry name" value="ATPsynth_dsu/esu_N"/>
</dbReference>
<dbReference type="NCBIfam" id="TIGR01216">
    <property type="entry name" value="ATP_synt_epsi"/>
    <property type="match status" value="1"/>
</dbReference>
<dbReference type="PANTHER" id="PTHR13822">
    <property type="entry name" value="ATP SYNTHASE DELTA/EPSILON CHAIN"/>
    <property type="match status" value="1"/>
</dbReference>
<dbReference type="PANTHER" id="PTHR13822:SF10">
    <property type="entry name" value="ATP SYNTHASE EPSILON CHAIN, CHLOROPLASTIC"/>
    <property type="match status" value="1"/>
</dbReference>
<dbReference type="Pfam" id="PF02823">
    <property type="entry name" value="ATP-synt_DE_N"/>
    <property type="match status" value="1"/>
</dbReference>
<dbReference type="SUPFAM" id="SSF51344">
    <property type="entry name" value="Epsilon subunit of F1F0-ATP synthase N-terminal domain"/>
    <property type="match status" value="1"/>
</dbReference>
<reference key="1">
    <citation type="journal article" date="2009" name="J. Bacteriol.">
        <title>Complete and draft genome sequences of six members of the Aquificales.</title>
        <authorList>
            <person name="Reysenbach A.-L."/>
            <person name="Hamamura N."/>
            <person name="Podar M."/>
            <person name="Griffiths E."/>
            <person name="Ferreira S."/>
            <person name="Hochstein R."/>
            <person name="Heidelberg J."/>
            <person name="Johnson J."/>
            <person name="Mead D."/>
            <person name="Pohorille A."/>
            <person name="Sarmiento M."/>
            <person name="Schweighofer K."/>
            <person name="Seshadri R."/>
            <person name="Voytek M.A."/>
        </authorList>
    </citation>
    <scope>NUCLEOTIDE SEQUENCE [LARGE SCALE GENOMIC DNA]</scope>
    <source>
        <strain>DSM 14350 / EX-H1</strain>
    </source>
</reference>
<proteinExistence type="inferred from homology"/>
<accession>C0QQ90</accession>
<keyword id="KW-0066">ATP synthesis</keyword>
<keyword id="KW-0997">Cell inner membrane</keyword>
<keyword id="KW-1003">Cell membrane</keyword>
<keyword id="KW-0139">CF(1)</keyword>
<keyword id="KW-0375">Hydrogen ion transport</keyword>
<keyword id="KW-0406">Ion transport</keyword>
<keyword id="KW-0472">Membrane</keyword>
<keyword id="KW-1185">Reference proteome</keyword>
<keyword id="KW-0813">Transport</keyword>
<sequence length="136" mass="15452">MYPLEVVTPEGIVFKGEVEQTVINTADGEIGILENHMLLLTNVVPGKLRIEIPEEEPKEYAVTHGVIDVRGDKVIVLVEEAFGISEIDVEREKRLLEEAKAKLEERETLSLEEIENYERMKERAEILLELAGVKVR</sequence>
<gene>
    <name evidence="1" type="primary">atpC</name>
    <name type="ordered locus">PERMA_1050</name>
</gene>
<organism>
    <name type="scientific">Persephonella marina (strain DSM 14350 / EX-H1)</name>
    <dbReference type="NCBI Taxonomy" id="123214"/>
    <lineage>
        <taxon>Bacteria</taxon>
        <taxon>Pseudomonadati</taxon>
        <taxon>Aquificota</taxon>
        <taxon>Aquificia</taxon>
        <taxon>Aquificales</taxon>
        <taxon>Hydrogenothermaceae</taxon>
        <taxon>Persephonella</taxon>
    </lineage>
</organism>
<evidence type="ECO:0000255" key="1">
    <source>
        <dbReference type="HAMAP-Rule" id="MF_00530"/>
    </source>
</evidence>
<feature type="chain" id="PRO_1000146341" description="ATP synthase epsilon chain">
    <location>
        <begin position="1"/>
        <end position="136"/>
    </location>
</feature>
<protein>
    <recommendedName>
        <fullName evidence="1">ATP synthase epsilon chain</fullName>
    </recommendedName>
    <alternativeName>
        <fullName evidence="1">ATP synthase F1 sector epsilon subunit</fullName>
    </alternativeName>
    <alternativeName>
        <fullName evidence="1">F-ATPase epsilon subunit</fullName>
    </alternativeName>
</protein>
<name>ATPE_PERMH</name>
<comment type="function">
    <text evidence="1">Produces ATP from ADP in the presence of a proton gradient across the membrane.</text>
</comment>
<comment type="subunit">
    <text evidence="1">F-type ATPases have 2 components, CF(1) - the catalytic core - and CF(0) - the membrane proton channel. CF(1) has five subunits: alpha(3), beta(3), gamma(1), delta(1), epsilon(1). CF(0) has three main subunits: a, b and c.</text>
</comment>
<comment type="subcellular location">
    <subcellularLocation>
        <location evidence="1">Cell inner membrane</location>
        <topology evidence="1">Peripheral membrane protein</topology>
    </subcellularLocation>
</comment>
<comment type="similarity">
    <text evidence="1">Belongs to the ATPase epsilon chain family.</text>
</comment>